<proteinExistence type="inferred from homology"/>
<dbReference type="EC" id="2.3.1.286" evidence="1 2"/>
<dbReference type="EMBL" id="CP000029">
    <property type="protein sequence ID" value="AAW55182.1"/>
    <property type="molecule type" value="Genomic_DNA"/>
</dbReference>
<dbReference type="RefSeq" id="WP_010959259.1">
    <property type="nucleotide sequence ID" value="NC_002976.3"/>
</dbReference>
<dbReference type="SMR" id="Q5HM33"/>
<dbReference type="STRING" id="176279.SERP1797"/>
<dbReference type="KEGG" id="ser:SERP1797"/>
<dbReference type="eggNOG" id="COG0846">
    <property type="taxonomic scope" value="Bacteria"/>
</dbReference>
<dbReference type="HOGENOM" id="CLU_023643_3_0_9"/>
<dbReference type="Proteomes" id="UP000000531">
    <property type="component" value="Chromosome"/>
</dbReference>
<dbReference type="GO" id="GO:0005737">
    <property type="term" value="C:cytoplasm"/>
    <property type="evidence" value="ECO:0007669"/>
    <property type="project" value="UniProtKB-SubCell"/>
</dbReference>
<dbReference type="GO" id="GO:0017136">
    <property type="term" value="F:histone deacetylase activity, NAD-dependent"/>
    <property type="evidence" value="ECO:0007669"/>
    <property type="project" value="TreeGrafter"/>
</dbReference>
<dbReference type="GO" id="GO:0070403">
    <property type="term" value="F:NAD+ binding"/>
    <property type="evidence" value="ECO:0007669"/>
    <property type="project" value="UniProtKB-UniRule"/>
</dbReference>
<dbReference type="GO" id="GO:0008270">
    <property type="term" value="F:zinc ion binding"/>
    <property type="evidence" value="ECO:0007669"/>
    <property type="project" value="UniProtKB-UniRule"/>
</dbReference>
<dbReference type="Gene3D" id="3.30.1600.10">
    <property type="entry name" value="SIR2/SIRT2 'Small Domain"/>
    <property type="match status" value="1"/>
</dbReference>
<dbReference type="Gene3D" id="3.40.50.1220">
    <property type="entry name" value="TPP-binding domain"/>
    <property type="match status" value="1"/>
</dbReference>
<dbReference type="HAMAP" id="MF_01968">
    <property type="entry name" value="Sirtuin_ClassU"/>
    <property type="match status" value="1"/>
</dbReference>
<dbReference type="InterPro" id="IPR029035">
    <property type="entry name" value="DHS-like_NAD/FAD-binding_dom"/>
</dbReference>
<dbReference type="InterPro" id="IPR050134">
    <property type="entry name" value="NAD-dep_sirtuin_deacylases"/>
</dbReference>
<dbReference type="InterPro" id="IPR003000">
    <property type="entry name" value="Sirtuin"/>
</dbReference>
<dbReference type="InterPro" id="IPR026591">
    <property type="entry name" value="Sirtuin_cat_small_dom_sf"/>
</dbReference>
<dbReference type="InterPro" id="IPR028628">
    <property type="entry name" value="Sirtuin_class_U"/>
</dbReference>
<dbReference type="InterPro" id="IPR026590">
    <property type="entry name" value="Ssirtuin_cat_dom"/>
</dbReference>
<dbReference type="NCBIfam" id="NF001752">
    <property type="entry name" value="PRK00481.1-1"/>
    <property type="match status" value="1"/>
</dbReference>
<dbReference type="PANTHER" id="PTHR11085:SF4">
    <property type="entry name" value="NAD-DEPENDENT PROTEIN DEACYLASE"/>
    <property type="match status" value="1"/>
</dbReference>
<dbReference type="PANTHER" id="PTHR11085">
    <property type="entry name" value="NAD-DEPENDENT PROTEIN DEACYLASE SIRTUIN-5, MITOCHONDRIAL-RELATED"/>
    <property type="match status" value="1"/>
</dbReference>
<dbReference type="Pfam" id="PF02146">
    <property type="entry name" value="SIR2"/>
    <property type="match status" value="1"/>
</dbReference>
<dbReference type="SUPFAM" id="SSF52467">
    <property type="entry name" value="DHS-like NAD/FAD-binding domain"/>
    <property type="match status" value="1"/>
</dbReference>
<dbReference type="PROSITE" id="PS50305">
    <property type="entry name" value="SIRTUIN"/>
    <property type="match status" value="1"/>
</dbReference>
<gene>
    <name evidence="1" type="primary">cobB</name>
    <name type="ordered locus">SERP1797</name>
</gene>
<organism>
    <name type="scientific">Staphylococcus epidermidis (strain ATCC 35984 / DSM 28319 / BCRC 17069 / CCUG 31568 / BM 3577 / RP62A)</name>
    <dbReference type="NCBI Taxonomy" id="176279"/>
    <lineage>
        <taxon>Bacteria</taxon>
        <taxon>Bacillati</taxon>
        <taxon>Bacillota</taxon>
        <taxon>Bacilli</taxon>
        <taxon>Bacillales</taxon>
        <taxon>Staphylococcaceae</taxon>
        <taxon>Staphylococcus</taxon>
    </lineage>
</organism>
<evidence type="ECO:0000255" key="1">
    <source>
        <dbReference type="HAMAP-Rule" id="MF_01968"/>
    </source>
</evidence>
<evidence type="ECO:0000255" key="2">
    <source>
        <dbReference type="PROSITE-ProRule" id="PRU00236"/>
    </source>
</evidence>
<keyword id="KW-0963">Cytoplasm</keyword>
<keyword id="KW-0479">Metal-binding</keyword>
<keyword id="KW-0520">NAD</keyword>
<keyword id="KW-1185">Reference proteome</keyword>
<keyword id="KW-0808">Transferase</keyword>
<keyword id="KW-0862">Zinc</keyword>
<protein>
    <recommendedName>
        <fullName evidence="1">NAD-dependent protein deacetylase</fullName>
        <ecNumber evidence="1 2">2.3.1.286</ecNumber>
    </recommendedName>
    <alternativeName>
        <fullName evidence="1">Regulatory protein SIR2 homolog</fullName>
    </alternativeName>
</protein>
<sequence length="246" mass="27743">MKKPDIQQLKDIVNNSNQIVFFTGAGVSVASGIPDFRSMGGLYDEISKDGQSPEYLLSIDHLHDNKESFINFYHERLLIADKKPNIVHQWIAQLENQQKSLGVITQNIDGLHEDAGSHNIDELHGTLNRFYCINCYEEYSKSYFMTHHLKYCEKCGNVIRPDIVLYGEMLNQKTVFKALDKIQHADTLIVLGSSLVVQPAAGFVSEFKGDNLVIINRDATPYDHTASLVIHDDMTSVIEEIVNSNS</sequence>
<reference key="1">
    <citation type="journal article" date="2005" name="J. Bacteriol.">
        <title>Insights on evolution of virulence and resistance from the complete genome analysis of an early methicillin-resistant Staphylococcus aureus strain and a biofilm-producing methicillin-resistant Staphylococcus epidermidis strain.</title>
        <authorList>
            <person name="Gill S.R."/>
            <person name="Fouts D.E."/>
            <person name="Archer G.L."/>
            <person name="Mongodin E.F."/>
            <person name="DeBoy R.T."/>
            <person name="Ravel J."/>
            <person name="Paulsen I.T."/>
            <person name="Kolonay J.F."/>
            <person name="Brinkac L.M."/>
            <person name="Beanan M.J."/>
            <person name="Dodson R.J."/>
            <person name="Daugherty S.C."/>
            <person name="Madupu R."/>
            <person name="Angiuoli S.V."/>
            <person name="Durkin A.S."/>
            <person name="Haft D.H."/>
            <person name="Vamathevan J.J."/>
            <person name="Khouri H."/>
            <person name="Utterback T.R."/>
            <person name="Lee C."/>
            <person name="Dimitrov G."/>
            <person name="Jiang L."/>
            <person name="Qin H."/>
            <person name="Weidman J."/>
            <person name="Tran K."/>
            <person name="Kang K.H."/>
            <person name="Hance I.R."/>
            <person name="Nelson K.E."/>
            <person name="Fraser C.M."/>
        </authorList>
    </citation>
    <scope>NUCLEOTIDE SEQUENCE [LARGE SCALE GENOMIC DNA]</scope>
    <source>
        <strain>ATCC 35984 / DSM 28319 / BCRC 17069 / CCUG 31568 / BM 3577 / RP62A</strain>
    </source>
</reference>
<name>NPD_STAEQ</name>
<feature type="chain" id="PRO_0000110358" description="NAD-dependent protein deacetylase">
    <location>
        <begin position="1"/>
        <end position="246"/>
    </location>
</feature>
<feature type="domain" description="Deacetylase sirtuin-type" evidence="2">
    <location>
        <begin position="1"/>
        <end position="246"/>
    </location>
</feature>
<feature type="active site" description="Proton acceptor" evidence="2">
    <location>
        <position position="124"/>
    </location>
</feature>
<feature type="binding site" evidence="1">
    <location>
        <position position="25"/>
    </location>
    <ligand>
        <name>NAD(+)</name>
        <dbReference type="ChEBI" id="CHEBI:57540"/>
    </ligand>
</feature>
<feature type="binding site" evidence="1">
    <location>
        <position position="36"/>
    </location>
    <ligand>
        <name>NAD(+)</name>
        <dbReference type="ChEBI" id="CHEBI:57540"/>
    </ligand>
</feature>
<feature type="binding site" evidence="1">
    <location>
        <position position="36"/>
    </location>
    <ligand>
        <name>nicotinamide</name>
        <dbReference type="ChEBI" id="CHEBI:17154"/>
    </ligand>
</feature>
<feature type="binding site" evidence="1">
    <location>
        <position position="37"/>
    </location>
    <ligand>
        <name>NAD(+)</name>
        <dbReference type="ChEBI" id="CHEBI:57540"/>
    </ligand>
</feature>
<feature type="binding site" evidence="1">
    <location>
        <position position="106"/>
    </location>
    <ligand>
        <name>NAD(+)</name>
        <dbReference type="ChEBI" id="CHEBI:57540"/>
    </ligand>
</feature>
<feature type="binding site" evidence="1">
    <location>
        <position position="108"/>
    </location>
    <ligand>
        <name>NAD(+)</name>
        <dbReference type="ChEBI" id="CHEBI:57540"/>
    </ligand>
</feature>
<feature type="binding site" evidence="1">
    <location>
        <position position="108"/>
    </location>
    <ligand>
        <name>nicotinamide</name>
        <dbReference type="ChEBI" id="CHEBI:17154"/>
    </ligand>
</feature>
<feature type="binding site" evidence="1">
    <location>
        <position position="109"/>
    </location>
    <ligand>
        <name>NAD(+)</name>
        <dbReference type="ChEBI" id="CHEBI:57540"/>
    </ligand>
</feature>
<feature type="binding site" evidence="1">
    <location>
        <position position="109"/>
    </location>
    <ligand>
        <name>nicotinamide</name>
        <dbReference type="ChEBI" id="CHEBI:17154"/>
    </ligand>
</feature>
<feature type="binding site" evidence="1">
    <location>
        <position position="124"/>
    </location>
    <ligand>
        <name>NAD(+)</name>
        <dbReference type="ChEBI" id="CHEBI:57540"/>
    </ligand>
</feature>
<feature type="binding site" evidence="1">
    <location>
        <position position="132"/>
    </location>
    <ligand>
        <name>Zn(2+)</name>
        <dbReference type="ChEBI" id="CHEBI:29105"/>
    </ligand>
</feature>
<feature type="binding site" evidence="1">
    <location>
        <position position="135"/>
    </location>
    <ligand>
        <name>Zn(2+)</name>
        <dbReference type="ChEBI" id="CHEBI:29105"/>
    </ligand>
</feature>
<feature type="binding site" evidence="1">
    <location>
        <position position="152"/>
    </location>
    <ligand>
        <name>Zn(2+)</name>
        <dbReference type="ChEBI" id="CHEBI:29105"/>
    </ligand>
</feature>
<feature type="binding site" evidence="1">
    <location>
        <position position="155"/>
    </location>
    <ligand>
        <name>Zn(2+)</name>
        <dbReference type="ChEBI" id="CHEBI:29105"/>
    </ligand>
</feature>
<feature type="binding site" evidence="1">
    <location>
        <position position="193"/>
    </location>
    <ligand>
        <name>NAD(+)</name>
        <dbReference type="ChEBI" id="CHEBI:57540"/>
    </ligand>
</feature>
<feature type="binding site" evidence="1">
    <location>
        <position position="194"/>
    </location>
    <ligand>
        <name>NAD(+)</name>
        <dbReference type="ChEBI" id="CHEBI:57540"/>
    </ligand>
</feature>
<feature type="binding site" evidence="1">
    <location>
        <position position="216"/>
    </location>
    <ligand>
        <name>NAD(+)</name>
        <dbReference type="ChEBI" id="CHEBI:57540"/>
    </ligand>
</feature>
<feature type="binding site" evidence="1">
    <location>
        <position position="233"/>
    </location>
    <ligand>
        <name>NAD(+)</name>
        <dbReference type="ChEBI" id="CHEBI:57540"/>
    </ligand>
</feature>
<accession>Q5HM33</accession>
<comment type="function">
    <text evidence="1">NAD-dependent protein deacetylase which modulates the activities of several enzymes which are inactive in their acetylated form.</text>
</comment>
<comment type="catalytic activity">
    <reaction evidence="1">
        <text>N(6)-acetyl-L-lysyl-[protein] + NAD(+) + H2O = 2''-O-acetyl-ADP-D-ribose + nicotinamide + L-lysyl-[protein]</text>
        <dbReference type="Rhea" id="RHEA:43636"/>
        <dbReference type="Rhea" id="RHEA-COMP:9752"/>
        <dbReference type="Rhea" id="RHEA-COMP:10731"/>
        <dbReference type="ChEBI" id="CHEBI:15377"/>
        <dbReference type="ChEBI" id="CHEBI:17154"/>
        <dbReference type="ChEBI" id="CHEBI:29969"/>
        <dbReference type="ChEBI" id="CHEBI:57540"/>
        <dbReference type="ChEBI" id="CHEBI:61930"/>
        <dbReference type="ChEBI" id="CHEBI:83767"/>
        <dbReference type="EC" id="2.3.1.286"/>
    </reaction>
</comment>
<comment type="cofactor">
    <cofactor evidence="1">
        <name>Zn(2+)</name>
        <dbReference type="ChEBI" id="CHEBI:29105"/>
    </cofactor>
    <text evidence="1">Binds 1 zinc ion per subunit.</text>
</comment>
<comment type="subcellular location">
    <subcellularLocation>
        <location evidence="1">Cytoplasm</location>
    </subcellularLocation>
</comment>
<comment type="similarity">
    <text evidence="1">Belongs to the sirtuin family. Class U subfamily.</text>
</comment>